<proteinExistence type="inferred from homology"/>
<protein>
    <recommendedName>
        <fullName evidence="1">Uracil phosphoribosyltransferase</fullName>
        <ecNumber evidence="1">2.4.2.9</ecNumber>
    </recommendedName>
    <alternativeName>
        <fullName evidence="1">UMP pyrophosphorylase</fullName>
    </alternativeName>
    <alternativeName>
        <fullName evidence="1">UPRTase</fullName>
    </alternativeName>
</protein>
<name>UPP_ACIBS</name>
<sequence length="211" mass="22833">MAIQEIRHPLIRHKLGLLRRADISTKNFRELAQEVTMLLTYEATKDLPVVDCEIEGWAGNVTTQRIAGKKITIVPILRAGIGMLDGVLNLIPSAKVSVLGLERDEATLEVRTYYKKLVPDVANRIAMIIDPMLATGNSLVAAIDVLKASGCKDIRVMVLVAAPEGIAKVEAAHPDIQLYTASIDNGLNEHGYIVPGLGDAGDKIFGSVQKD</sequence>
<feature type="chain" id="PRO_1000139085" description="Uracil phosphoribosyltransferase">
    <location>
        <begin position="1"/>
        <end position="211"/>
    </location>
</feature>
<feature type="binding site" evidence="1">
    <location>
        <position position="78"/>
    </location>
    <ligand>
        <name>5-phospho-alpha-D-ribose 1-diphosphate</name>
        <dbReference type="ChEBI" id="CHEBI:58017"/>
    </ligand>
</feature>
<feature type="binding site" evidence="1">
    <location>
        <position position="103"/>
    </location>
    <ligand>
        <name>5-phospho-alpha-D-ribose 1-diphosphate</name>
        <dbReference type="ChEBI" id="CHEBI:58017"/>
    </ligand>
</feature>
<feature type="binding site" evidence="1">
    <location>
        <begin position="130"/>
        <end position="138"/>
    </location>
    <ligand>
        <name>5-phospho-alpha-D-ribose 1-diphosphate</name>
        <dbReference type="ChEBI" id="CHEBI:58017"/>
    </ligand>
</feature>
<feature type="binding site" evidence="1">
    <location>
        <position position="193"/>
    </location>
    <ligand>
        <name>uracil</name>
        <dbReference type="ChEBI" id="CHEBI:17568"/>
    </ligand>
</feature>
<feature type="binding site" evidence="1">
    <location>
        <begin position="198"/>
        <end position="200"/>
    </location>
    <ligand>
        <name>uracil</name>
        <dbReference type="ChEBI" id="CHEBI:17568"/>
    </ligand>
</feature>
<feature type="binding site" evidence="1">
    <location>
        <position position="199"/>
    </location>
    <ligand>
        <name>5-phospho-alpha-D-ribose 1-diphosphate</name>
        <dbReference type="ChEBI" id="CHEBI:58017"/>
    </ligand>
</feature>
<reference key="1">
    <citation type="journal article" date="2008" name="PLoS ONE">
        <title>Comparative analysis of Acinetobacters: three genomes for three lifestyles.</title>
        <authorList>
            <person name="Vallenet D."/>
            <person name="Nordmann P."/>
            <person name="Barbe V."/>
            <person name="Poirel L."/>
            <person name="Mangenot S."/>
            <person name="Bataille E."/>
            <person name="Dossat C."/>
            <person name="Gas S."/>
            <person name="Kreimeyer A."/>
            <person name="Lenoble P."/>
            <person name="Oztas S."/>
            <person name="Poulain J."/>
            <person name="Segurens B."/>
            <person name="Robert C."/>
            <person name="Abergel C."/>
            <person name="Claverie J.-M."/>
            <person name="Raoult D."/>
            <person name="Medigue C."/>
            <person name="Weissenbach J."/>
            <person name="Cruveiller S."/>
        </authorList>
    </citation>
    <scope>NUCLEOTIDE SEQUENCE [LARGE SCALE GENOMIC DNA]</scope>
    <source>
        <strain>SDF</strain>
    </source>
</reference>
<dbReference type="EC" id="2.4.2.9" evidence="1"/>
<dbReference type="EMBL" id="CU468230">
    <property type="protein sequence ID" value="CAP02006.1"/>
    <property type="molecule type" value="Genomic_DNA"/>
</dbReference>
<dbReference type="SMR" id="B0VU43"/>
<dbReference type="KEGG" id="abm:ABSDF2701"/>
<dbReference type="HOGENOM" id="CLU_067096_2_2_6"/>
<dbReference type="UniPathway" id="UPA00574">
    <property type="reaction ID" value="UER00636"/>
</dbReference>
<dbReference type="Proteomes" id="UP000001741">
    <property type="component" value="Chromosome"/>
</dbReference>
<dbReference type="GO" id="GO:0005525">
    <property type="term" value="F:GTP binding"/>
    <property type="evidence" value="ECO:0007669"/>
    <property type="project" value="UniProtKB-KW"/>
</dbReference>
<dbReference type="GO" id="GO:0000287">
    <property type="term" value="F:magnesium ion binding"/>
    <property type="evidence" value="ECO:0007669"/>
    <property type="project" value="UniProtKB-UniRule"/>
</dbReference>
<dbReference type="GO" id="GO:0004845">
    <property type="term" value="F:uracil phosphoribosyltransferase activity"/>
    <property type="evidence" value="ECO:0007669"/>
    <property type="project" value="UniProtKB-UniRule"/>
</dbReference>
<dbReference type="GO" id="GO:0044206">
    <property type="term" value="P:UMP salvage"/>
    <property type="evidence" value="ECO:0007669"/>
    <property type="project" value="UniProtKB-UniRule"/>
</dbReference>
<dbReference type="GO" id="GO:0006223">
    <property type="term" value="P:uracil salvage"/>
    <property type="evidence" value="ECO:0007669"/>
    <property type="project" value="InterPro"/>
</dbReference>
<dbReference type="CDD" id="cd06223">
    <property type="entry name" value="PRTases_typeI"/>
    <property type="match status" value="1"/>
</dbReference>
<dbReference type="FunFam" id="3.40.50.2020:FF:000003">
    <property type="entry name" value="Uracil phosphoribosyltransferase"/>
    <property type="match status" value="1"/>
</dbReference>
<dbReference type="Gene3D" id="3.40.50.2020">
    <property type="match status" value="1"/>
</dbReference>
<dbReference type="HAMAP" id="MF_01218_B">
    <property type="entry name" value="Upp_B"/>
    <property type="match status" value="1"/>
</dbReference>
<dbReference type="InterPro" id="IPR000836">
    <property type="entry name" value="PRibTrfase_dom"/>
</dbReference>
<dbReference type="InterPro" id="IPR029057">
    <property type="entry name" value="PRTase-like"/>
</dbReference>
<dbReference type="InterPro" id="IPR034332">
    <property type="entry name" value="Upp_B"/>
</dbReference>
<dbReference type="InterPro" id="IPR050054">
    <property type="entry name" value="UPRTase/APRTase"/>
</dbReference>
<dbReference type="InterPro" id="IPR005765">
    <property type="entry name" value="Ura_phspho_trans"/>
</dbReference>
<dbReference type="NCBIfam" id="NF001097">
    <property type="entry name" value="PRK00129.1"/>
    <property type="match status" value="1"/>
</dbReference>
<dbReference type="NCBIfam" id="TIGR01091">
    <property type="entry name" value="upp"/>
    <property type="match status" value="1"/>
</dbReference>
<dbReference type="PANTHER" id="PTHR32315">
    <property type="entry name" value="ADENINE PHOSPHORIBOSYLTRANSFERASE"/>
    <property type="match status" value="1"/>
</dbReference>
<dbReference type="PANTHER" id="PTHR32315:SF4">
    <property type="entry name" value="URACIL PHOSPHORIBOSYLTRANSFERASE, CHLOROPLASTIC"/>
    <property type="match status" value="1"/>
</dbReference>
<dbReference type="Pfam" id="PF14681">
    <property type="entry name" value="UPRTase"/>
    <property type="match status" value="1"/>
</dbReference>
<dbReference type="SUPFAM" id="SSF53271">
    <property type="entry name" value="PRTase-like"/>
    <property type="match status" value="1"/>
</dbReference>
<comment type="function">
    <text evidence="1">Catalyzes the conversion of uracil and 5-phospho-alpha-D-ribose 1-diphosphate (PRPP) to UMP and diphosphate.</text>
</comment>
<comment type="catalytic activity">
    <reaction evidence="1">
        <text>UMP + diphosphate = 5-phospho-alpha-D-ribose 1-diphosphate + uracil</text>
        <dbReference type="Rhea" id="RHEA:13017"/>
        <dbReference type="ChEBI" id="CHEBI:17568"/>
        <dbReference type="ChEBI" id="CHEBI:33019"/>
        <dbReference type="ChEBI" id="CHEBI:57865"/>
        <dbReference type="ChEBI" id="CHEBI:58017"/>
        <dbReference type="EC" id="2.4.2.9"/>
    </reaction>
</comment>
<comment type="cofactor">
    <cofactor evidence="1">
        <name>Mg(2+)</name>
        <dbReference type="ChEBI" id="CHEBI:18420"/>
    </cofactor>
    <text evidence="1">Binds 1 Mg(2+) ion per subunit. The magnesium is bound as Mg-PRPP.</text>
</comment>
<comment type="activity regulation">
    <text evidence="1">Allosterically activated by GTP.</text>
</comment>
<comment type="pathway">
    <text evidence="1">Pyrimidine metabolism; UMP biosynthesis via salvage pathway; UMP from uracil: step 1/1.</text>
</comment>
<comment type="similarity">
    <text evidence="1">Belongs to the UPRTase family.</text>
</comment>
<gene>
    <name evidence="1" type="primary">upp</name>
    <name type="ordered locus">ABSDF2701</name>
</gene>
<accession>B0VU43</accession>
<keyword id="KW-0021">Allosteric enzyme</keyword>
<keyword id="KW-0328">Glycosyltransferase</keyword>
<keyword id="KW-0342">GTP-binding</keyword>
<keyword id="KW-0460">Magnesium</keyword>
<keyword id="KW-0547">Nucleotide-binding</keyword>
<keyword id="KW-0808">Transferase</keyword>
<evidence type="ECO:0000255" key="1">
    <source>
        <dbReference type="HAMAP-Rule" id="MF_01218"/>
    </source>
</evidence>
<organism>
    <name type="scientific">Acinetobacter baumannii (strain SDF)</name>
    <dbReference type="NCBI Taxonomy" id="509170"/>
    <lineage>
        <taxon>Bacteria</taxon>
        <taxon>Pseudomonadati</taxon>
        <taxon>Pseudomonadota</taxon>
        <taxon>Gammaproteobacteria</taxon>
        <taxon>Moraxellales</taxon>
        <taxon>Moraxellaceae</taxon>
        <taxon>Acinetobacter</taxon>
        <taxon>Acinetobacter calcoaceticus/baumannii complex</taxon>
    </lineage>
</organism>